<dbReference type="EC" id="2.3.1.-" evidence="1"/>
<dbReference type="EMBL" id="LT708304">
    <property type="protein sequence ID" value="SIU00010.1"/>
    <property type="molecule type" value="Genomic_DNA"/>
</dbReference>
<dbReference type="RefSeq" id="NP_855059.1">
    <property type="nucleotide sequence ID" value="NC_002945.3"/>
</dbReference>
<dbReference type="RefSeq" id="WP_003407185.1">
    <property type="nucleotide sequence ID" value="NC_002945.4"/>
</dbReference>
<dbReference type="SMR" id="Q7U064"/>
<dbReference type="KEGG" id="mbo:BQ2027_MB1406"/>
<dbReference type="PATRIC" id="fig|233413.5.peg.1541"/>
<dbReference type="UniPathway" id="UPA00094"/>
<dbReference type="Proteomes" id="UP000001419">
    <property type="component" value="Chromosome"/>
</dbReference>
<dbReference type="GO" id="GO:0016747">
    <property type="term" value="F:acyltransferase activity, transferring groups other than amino-acyl groups"/>
    <property type="evidence" value="ECO:0007669"/>
    <property type="project" value="InterPro"/>
</dbReference>
<dbReference type="GO" id="GO:0006633">
    <property type="term" value="P:fatty acid biosynthetic process"/>
    <property type="evidence" value="ECO:0007669"/>
    <property type="project" value="UniProtKB-UniPathway"/>
</dbReference>
<dbReference type="GO" id="GO:0030639">
    <property type="term" value="P:polyketide biosynthetic process"/>
    <property type="evidence" value="ECO:0007669"/>
    <property type="project" value="TreeGrafter"/>
</dbReference>
<dbReference type="CDD" id="cd00831">
    <property type="entry name" value="CHS_like"/>
    <property type="match status" value="1"/>
</dbReference>
<dbReference type="FunFam" id="3.40.47.10:FF:000014">
    <property type="entry name" value="Chalcone synthase 1"/>
    <property type="match status" value="1"/>
</dbReference>
<dbReference type="Gene3D" id="3.40.47.10">
    <property type="match status" value="2"/>
</dbReference>
<dbReference type="InterPro" id="IPR012328">
    <property type="entry name" value="Chalcone/stilbene_synt_C"/>
</dbReference>
<dbReference type="InterPro" id="IPR001099">
    <property type="entry name" value="Chalcone/stilbene_synt_N"/>
</dbReference>
<dbReference type="InterPro" id="IPR011141">
    <property type="entry name" value="Polyketide_synthase_type-III"/>
</dbReference>
<dbReference type="InterPro" id="IPR016039">
    <property type="entry name" value="Thiolase-like"/>
</dbReference>
<dbReference type="PANTHER" id="PTHR11877">
    <property type="entry name" value="HYDROXYMETHYLGLUTARYL-COA SYNTHASE"/>
    <property type="match status" value="1"/>
</dbReference>
<dbReference type="PANTHER" id="PTHR11877:SF46">
    <property type="entry name" value="TYPE III POLYKETIDE SYNTHASE A"/>
    <property type="match status" value="1"/>
</dbReference>
<dbReference type="Pfam" id="PF02797">
    <property type="entry name" value="Chal_sti_synt_C"/>
    <property type="match status" value="1"/>
</dbReference>
<dbReference type="Pfam" id="PF00195">
    <property type="entry name" value="Chal_sti_synt_N"/>
    <property type="match status" value="1"/>
</dbReference>
<dbReference type="PIRSF" id="PIRSF000451">
    <property type="entry name" value="PKS_III"/>
    <property type="match status" value="1"/>
</dbReference>
<dbReference type="SUPFAM" id="SSF53901">
    <property type="entry name" value="Thiolase-like"/>
    <property type="match status" value="1"/>
</dbReference>
<proteinExistence type="inferred from homology"/>
<gene>
    <name type="primary">pks18</name>
    <name type="ordered locus">BQ2027_MB1406</name>
</gene>
<reference key="1">
    <citation type="journal article" date="2003" name="Proc. Natl. Acad. Sci. U.S.A.">
        <title>The complete genome sequence of Mycobacterium bovis.</title>
        <authorList>
            <person name="Garnier T."/>
            <person name="Eiglmeier K."/>
            <person name="Camus J.-C."/>
            <person name="Medina N."/>
            <person name="Mansoor H."/>
            <person name="Pryor M."/>
            <person name="Duthoy S."/>
            <person name="Grondin S."/>
            <person name="Lacroix C."/>
            <person name="Monsempe C."/>
            <person name="Simon S."/>
            <person name="Harris B."/>
            <person name="Atkin R."/>
            <person name="Doggett J."/>
            <person name="Mayes R."/>
            <person name="Keating L."/>
            <person name="Wheeler P.R."/>
            <person name="Parkhill J."/>
            <person name="Barrell B.G."/>
            <person name="Cole S.T."/>
            <person name="Gordon S.V."/>
            <person name="Hewinson R.G."/>
        </authorList>
    </citation>
    <scope>NUCLEOTIDE SEQUENCE [LARGE SCALE GENOMIC DNA]</scope>
    <source>
        <strain>ATCC BAA-935 / AF2122/97</strain>
    </source>
</reference>
<reference key="2">
    <citation type="journal article" date="2017" name="Genome Announc.">
        <title>Updated reference genome sequence and annotation of Mycobacterium bovis AF2122/97.</title>
        <authorList>
            <person name="Malone K.M."/>
            <person name="Farrell D."/>
            <person name="Stuber T.P."/>
            <person name="Schubert O.T."/>
            <person name="Aebersold R."/>
            <person name="Robbe-Austerman S."/>
            <person name="Gordon S.V."/>
        </authorList>
    </citation>
    <scope>NUCLEOTIDE SEQUENCE [LARGE SCALE GENOMIC DNA]</scope>
    <scope>GENOME REANNOTATION</scope>
    <source>
        <strain>ATCC BAA-935 / AF2122/97</strain>
    </source>
</reference>
<name>PKS18_MYCBO</name>
<feature type="chain" id="PRO_0000407321" description="Alpha-pyrone synthesis polyketide synthase-like Pks18">
    <location>
        <begin position="1"/>
        <end position="393"/>
    </location>
</feature>
<feature type="region of interest" description="Disordered" evidence="2">
    <location>
        <begin position="1"/>
        <end position="26"/>
    </location>
</feature>
<feature type="active site" description="Nucleophile" evidence="1">
    <location>
        <position position="175"/>
    </location>
</feature>
<feature type="binding site" evidence="1">
    <location>
        <position position="221"/>
    </location>
    <ligand>
        <name>substrate</name>
    </ligand>
</feature>
<protein>
    <recommendedName>
        <fullName evidence="1">Alpha-pyrone synthesis polyketide synthase-like Pks18</fullName>
        <ecNumber evidence="1">2.3.1.-</ecNumber>
    </recommendedName>
    <alternativeName>
        <fullName evidence="1">Alpha-pyrone synthesis polyketide synthase type III Pks18</fullName>
    </alternativeName>
    <alternativeName>
        <fullName evidence="1">Chalcone synthase-like protein</fullName>
        <shortName evidence="1">CHS-like</shortName>
    </alternativeName>
</protein>
<organism>
    <name type="scientific">Mycobacterium bovis (strain ATCC BAA-935 / AF2122/97)</name>
    <dbReference type="NCBI Taxonomy" id="233413"/>
    <lineage>
        <taxon>Bacteria</taxon>
        <taxon>Bacillati</taxon>
        <taxon>Actinomycetota</taxon>
        <taxon>Actinomycetes</taxon>
        <taxon>Mycobacteriales</taxon>
        <taxon>Mycobacteriaceae</taxon>
        <taxon>Mycobacterium</taxon>
        <taxon>Mycobacterium tuberculosis complex</taxon>
    </lineage>
</organism>
<keyword id="KW-0012">Acyltransferase</keyword>
<keyword id="KW-0276">Fatty acid metabolism</keyword>
<keyword id="KW-0443">Lipid metabolism</keyword>
<keyword id="KW-1185">Reference proteome</keyword>
<keyword id="KW-0808">Transferase</keyword>
<sequence>MNVSAESGAPRRAGQRHEVGLAQLPPAPPTTVAVIEGLATGTPRRVVNQSDAADRVAELFLDPGQRERIPRVYQKSRITTRRMAVDPLDAKFDVFRREPATIRDRMHLFYEHAVPLAVDVSKRALAGLPYRAAEIGLLVLATSTGFIAPGVDVAIVKELGLSPSISRVVVNFMGCAAAMNALGTATNYVRAHPAMKALVVCIELCSVNAVFADDINDVVIHSLFGDGCAALVIGASQVQEKLEPGKVVVRSSFSQLLDNTEDGIVLGVNHNGITCELSENLPGYIFSGVAPVVTEMLWDNGLQISDIDLWAIHPGGPKIIEQSVRSLGISAELAAQSWDVLARFGNMLSVSLIFVLETMVQQAESAKAISTGVAFAFGPGVTVEGMLFDIIRR</sequence>
<evidence type="ECO:0000250" key="1">
    <source>
        <dbReference type="UniProtKB" id="P9WPF1"/>
    </source>
</evidence>
<evidence type="ECO:0000256" key="2">
    <source>
        <dbReference type="SAM" id="MobiDB-lite"/>
    </source>
</evidence>
<evidence type="ECO:0000305" key="3"/>
<comment type="function">
    <text evidence="1">Involved in the biosynthesis of tri- and tetraketide alpha-pyrones. Pks18 catalyzes the extension of medium- and long-chain aliphatic acyl-CoA substrates by using malonyl-CoA as an extender molecule to synthesize polyketide products.</text>
</comment>
<comment type="pathway">
    <text evidence="1">Lipid metabolism; fatty acid biosynthesis.</text>
</comment>
<comment type="subunit">
    <text evidence="1">Homodimer.</text>
</comment>
<comment type="similarity">
    <text evidence="3">Belongs to the thiolase-like superfamily. Chalcone/stilbene synthases family.</text>
</comment>
<accession>Q7U064</accession>
<accession>A0A1R3XY69</accession>
<accession>X2BHP7</accession>